<reference key="1">
    <citation type="journal article" date="2008" name="DNA Res.">
        <title>Comparative genome analysis of Lactobacillus reuteri and Lactobacillus fermentum reveal a genomic island for reuterin and cobalamin production.</title>
        <authorList>
            <person name="Morita H."/>
            <person name="Toh H."/>
            <person name="Fukuda S."/>
            <person name="Horikawa H."/>
            <person name="Oshima K."/>
            <person name="Suzuki T."/>
            <person name="Murakami M."/>
            <person name="Hisamatsu S."/>
            <person name="Kato Y."/>
            <person name="Takizawa T."/>
            <person name="Fukuoka H."/>
            <person name="Yoshimura T."/>
            <person name="Itoh K."/>
            <person name="O'Sullivan D.J."/>
            <person name="McKay L.L."/>
            <person name="Ohno H."/>
            <person name="Kikuchi J."/>
            <person name="Masaoka T."/>
            <person name="Hattori M."/>
        </authorList>
    </citation>
    <scope>NUCLEOTIDE SEQUENCE [LARGE SCALE GENOMIC DNA]</scope>
    <source>
        <strain>NBRC 3956 / LMG 18251</strain>
    </source>
</reference>
<name>MURG_LIMF3</name>
<comment type="function">
    <text evidence="1">Cell wall formation. Catalyzes the transfer of a GlcNAc subunit on undecaprenyl-pyrophosphoryl-MurNAc-pentapeptide (lipid intermediate I) to form undecaprenyl-pyrophosphoryl-MurNAc-(pentapeptide)GlcNAc (lipid intermediate II).</text>
</comment>
<comment type="catalytic activity">
    <reaction evidence="1">
        <text>Mur2Ac(oyl-L-Ala-gamma-D-Glu-L-Lys-D-Ala-D-Ala)-di-trans,octa-cis-undecaprenyl diphosphate + UDP-N-acetyl-alpha-D-glucosamine = beta-D-GlcNAc-(1-&gt;4)-Mur2Ac(oyl-L-Ala-gamma-D-Glu-L-Lys-D-Ala-D-Ala)-di-trans,octa-cis-undecaprenyl diphosphate + UDP + H(+)</text>
        <dbReference type="Rhea" id="RHEA:23192"/>
        <dbReference type="ChEBI" id="CHEBI:15378"/>
        <dbReference type="ChEBI" id="CHEBI:57705"/>
        <dbReference type="ChEBI" id="CHEBI:58223"/>
        <dbReference type="ChEBI" id="CHEBI:60032"/>
        <dbReference type="ChEBI" id="CHEBI:60033"/>
        <dbReference type="EC" id="2.4.1.227"/>
    </reaction>
</comment>
<comment type="pathway">
    <text evidence="1">Cell wall biogenesis; peptidoglycan biosynthesis.</text>
</comment>
<comment type="subcellular location">
    <subcellularLocation>
        <location evidence="1">Cell membrane</location>
        <topology evidence="1">Peripheral membrane protein</topology>
        <orientation evidence="1">Cytoplasmic side</orientation>
    </subcellularLocation>
</comment>
<comment type="similarity">
    <text evidence="1">Belongs to the glycosyltransferase 28 family. MurG subfamily.</text>
</comment>
<protein>
    <recommendedName>
        <fullName evidence="1">UDP-N-acetylglucosamine--N-acetylmuramyl-(pentapeptide) pyrophosphoryl-undecaprenol N-acetylglucosamine transferase</fullName>
        <ecNumber evidence="1">2.4.1.227</ecNumber>
    </recommendedName>
    <alternativeName>
        <fullName evidence="1">Undecaprenyl-PP-MurNAc-pentapeptide-UDPGlcNAc GlcNAc transferase</fullName>
    </alternativeName>
</protein>
<feature type="chain" id="PRO_1000090443" description="UDP-N-acetylglucosamine--N-acetylmuramyl-(pentapeptide) pyrophosphoryl-undecaprenol N-acetylglucosamine transferase">
    <location>
        <begin position="1"/>
        <end position="368"/>
    </location>
</feature>
<feature type="binding site" evidence="1">
    <location>
        <begin position="10"/>
        <end position="12"/>
    </location>
    <ligand>
        <name>UDP-N-acetyl-alpha-D-glucosamine</name>
        <dbReference type="ChEBI" id="CHEBI:57705"/>
    </ligand>
</feature>
<feature type="binding site" evidence="1">
    <location>
        <position position="124"/>
    </location>
    <ligand>
        <name>UDP-N-acetyl-alpha-D-glucosamine</name>
        <dbReference type="ChEBI" id="CHEBI:57705"/>
    </ligand>
</feature>
<feature type="binding site" evidence="1">
    <location>
        <position position="196"/>
    </location>
    <ligand>
        <name>UDP-N-acetyl-alpha-D-glucosamine</name>
        <dbReference type="ChEBI" id="CHEBI:57705"/>
    </ligand>
</feature>
<feature type="binding site" evidence="1">
    <location>
        <position position="251"/>
    </location>
    <ligand>
        <name>UDP-N-acetyl-alpha-D-glucosamine</name>
        <dbReference type="ChEBI" id="CHEBI:57705"/>
    </ligand>
</feature>
<feature type="binding site" evidence="1">
    <location>
        <position position="296"/>
    </location>
    <ligand>
        <name>UDP-N-acetyl-alpha-D-glucosamine</name>
        <dbReference type="ChEBI" id="CHEBI:57705"/>
    </ligand>
</feature>
<organism>
    <name type="scientific">Limosilactobacillus fermentum (strain NBRC 3956 / LMG 18251)</name>
    <name type="common">Lactobacillus fermentum</name>
    <dbReference type="NCBI Taxonomy" id="334390"/>
    <lineage>
        <taxon>Bacteria</taxon>
        <taxon>Bacillati</taxon>
        <taxon>Bacillota</taxon>
        <taxon>Bacilli</taxon>
        <taxon>Lactobacillales</taxon>
        <taxon>Lactobacillaceae</taxon>
        <taxon>Limosilactobacillus</taxon>
    </lineage>
</organism>
<keyword id="KW-0131">Cell cycle</keyword>
<keyword id="KW-0132">Cell division</keyword>
<keyword id="KW-1003">Cell membrane</keyword>
<keyword id="KW-0133">Cell shape</keyword>
<keyword id="KW-0961">Cell wall biogenesis/degradation</keyword>
<keyword id="KW-0328">Glycosyltransferase</keyword>
<keyword id="KW-0472">Membrane</keyword>
<keyword id="KW-0573">Peptidoglycan synthesis</keyword>
<keyword id="KW-1185">Reference proteome</keyword>
<keyword id="KW-0808">Transferase</keyword>
<evidence type="ECO:0000255" key="1">
    <source>
        <dbReference type="HAMAP-Rule" id="MF_00033"/>
    </source>
</evidence>
<proteinExistence type="inferred from homology"/>
<gene>
    <name evidence="1" type="primary">murG</name>
    <name type="ordered locus">LAF_0574</name>
</gene>
<dbReference type="EC" id="2.4.1.227" evidence="1"/>
<dbReference type="EMBL" id="AP008937">
    <property type="protein sequence ID" value="BAG26910.1"/>
    <property type="molecule type" value="Genomic_DNA"/>
</dbReference>
<dbReference type="RefSeq" id="WP_012390999.1">
    <property type="nucleotide sequence ID" value="NC_010610.1"/>
</dbReference>
<dbReference type="SMR" id="B2GB78"/>
<dbReference type="CAZy" id="GT28">
    <property type="family name" value="Glycosyltransferase Family 28"/>
</dbReference>
<dbReference type="KEGG" id="lfe:LAF_0574"/>
<dbReference type="eggNOG" id="COG0707">
    <property type="taxonomic scope" value="Bacteria"/>
</dbReference>
<dbReference type="HOGENOM" id="CLU_037404_0_1_9"/>
<dbReference type="UniPathway" id="UPA00219"/>
<dbReference type="Proteomes" id="UP000001697">
    <property type="component" value="Chromosome"/>
</dbReference>
<dbReference type="GO" id="GO:0005886">
    <property type="term" value="C:plasma membrane"/>
    <property type="evidence" value="ECO:0007669"/>
    <property type="project" value="UniProtKB-SubCell"/>
</dbReference>
<dbReference type="GO" id="GO:0050511">
    <property type="term" value="F:undecaprenyldiphospho-muramoylpentapeptide beta-N-acetylglucosaminyltransferase activity"/>
    <property type="evidence" value="ECO:0007669"/>
    <property type="project" value="UniProtKB-UniRule"/>
</dbReference>
<dbReference type="GO" id="GO:0005975">
    <property type="term" value="P:carbohydrate metabolic process"/>
    <property type="evidence" value="ECO:0007669"/>
    <property type="project" value="InterPro"/>
</dbReference>
<dbReference type="GO" id="GO:0051301">
    <property type="term" value="P:cell division"/>
    <property type="evidence" value="ECO:0007669"/>
    <property type="project" value="UniProtKB-KW"/>
</dbReference>
<dbReference type="GO" id="GO:0071555">
    <property type="term" value="P:cell wall organization"/>
    <property type="evidence" value="ECO:0007669"/>
    <property type="project" value="UniProtKB-KW"/>
</dbReference>
<dbReference type="GO" id="GO:0030259">
    <property type="term" value="P:lipid glycosylation"/>
    <property type="evidence" value="ECO:0007669"/>
    <property type="project" value="UniProtKB-UniRule"/>
</dbReference>
<dbReference type="GO" id="GO:0009252">
    <property type="term" value="P:peptidoglycan biosynthetic process"/>
    <property type="evidence" value="ECO:0007669"/>
    <property type="project" value="UniProtKB-UniRule"/>
</dbReference>
<dbReference type="GO" id="GO:0008360">
    <property type="term" value="P:regulation of cell shape"/>
    <property type="evidence" value="ECO:0007669"/>
    <property type="project" value="UniProtKB-KW"/>
</dbReference>
<dbReference type="CDD" id="cd03785">
    <property type="entry name" value="GT28_MurG"/>
    <property type="match status" value="1"/>
</dbReference>
<dbReference type="Gene3D" id="3.40.50.2000">
    <property type="entry name" value="Glycogen Phosphorylase B"/>
    <property type="match status" value="2"/>
</dbReference>
<dbReference type="HAMAP" id="MF_00033">
    <property type="entry name" value="MurG"/>
    <property type="match status" value="1"/>
</dbReference>
<dbReference type="InterPro" id="IPR006009">
    <property type="entry name" value="GlcNAc_MurG"/>
</dbReference>
<dbReference type="InterPro" id="IPR007235">
    <property type="entry name" value="Glyco_trans_28_C"/>
</dbReference>
<dbReference type="InterPro" id="IPR004276">
    <property type="entry name" value="GlycoTrans_28_N"/>
</dbReference>
<dbReference type="NCBIfam" id="TIGR01133">
    <property type="entry name" value="murG"/>
    <property type="match status" value="1"/>
</dbReference>
<dbReference type="PANTHER" id="PTHR21015:SF22">
    <property type="entry name" value="GLYCOSYLTRANSFERASE"/>
    <property type="match status" value="1"/>
</dbReference>
<dbReference type="PANTHER" id="PTHR21015">
    <property type="entry name" value="UDP-N-ACETYLGLUCOSAMINE--N-ACETYLMURAMYL-(PENTAPEPTIDE) PYROPHOSPHORYL-UNDECAPRENOL N-ACETYLGLUCOSAMINE TRANSFERASE 1"/>
    <property type="match status" value="1"/>
</dbReference>
<dbReference type="Pfam" id="PF04101">
    <property type="entry name" value="Glyco_tran_28_C"/>
    <property type="match status" value="1"/>
</dbReference>
<dbReference type="Pfam" id="PF03033">
    <property type="entry name" value="Glyco_transf_28"/>
    <property type="match status" value="1"/>
</dbReference>
<dbReference type="SUPFAM" id="SSF53756">
    <property type="entry name" value="UDP-Glycosyltransferase/glycogen phosphorylase"/>
    <property type="match status" value="1"/>
</dbReference>
<accession>B2GB78</accession>
<sequence>MRLMVSGGGTGGHIYPALALIERLKQVEPDTEVLYVGAKRGLETKIVPQAGYRLETMEVQGFRRSLSLENVKTVYLFLKAVAQAKKLIKDFRPDVVLGTGGYVSGAVLYAAAKLGVPTVIHEQNSVVGVTNKFLARYVNEVAIAFEAARSQFPKSSVTMTGNPRAQQVAQRTNSAYSWTEDGLKDGVPTIMIFGGSQGAPRINKAVVEALPSFNEQPYQVIFATGRKRYDDVMGALAGQPIGDNVKVVPYIEDMPDKLPHVDALVSRAGATTIAEVTALGIPTILIPSPYVTANHQVKNAEALVKKGAALMILEDQLDGRSLITQANHLMNDAAVRQKMAANSKAVGHPDASDQLIAVLKKAIADHQK</sequence>